<comment type="function">
    <text evidence="1">Beta toxins bind voltage-independently at site-4 of sodium channels (Nav) and shift the voltage of activation toward more negative potentials thereby affecting sodium channel activation and promoting spontaneous and repetitive firing.</text>
</comment>
<comment type="subcellular location">
    <subcellularLocation>
        <location evidence="2">Secreted</location>
    </subcellularLocation>
</comment>
<comment type="tissue specificity">
    <text evidence="7">Expressed by the venom gland.</text>
</comment>
<comment type="domain">
    <text evidence="6">Has the structural arrangement of an alpha-helix connected to antiparallel beta-sheets by disulfide bonds (CS-alpha/beta).</text>
</comment>
<comment type="similarity">
    <text evidence="4">Belongs to the long (4 C-C) scorpion toxin superfamily. Sodium channel inhibitor family. Beta subfamily.</text>
</comment>
<protein>
    <recommendedName>
        <fullName evidence="3">Putative beta-neurotoxin RjAa7</fullName>
    </recommendedName>
</protein>
<proteinExistence type="evidence at transcript level"/>
<organism>
    <name type="scientific">Rhopalurus junceus</name>
    <name type="common">Caribbean blue scorpion</name>
    <dbReference type="NCBI Taxonomy" id="419285"/>
    <lineage>
        <taxon>Eukaryota</taxon>
        <taxon>Metazoa</taxon>
        <taxon>Ecdysozoa</taxon>
        <taxon>Arthropoda</taxon>
        <taxon>Chelicerata</taxon>
        <taxon>Arachnida</taxon>
        <taxon>Scorpiones</taxon>
        <taxon>Buthida</taxon>
        <taxon>Buthoidea</taxon>
        <taxon>Buthidae</taxon>
        <taxon>Rhopalurus</taxon>
    </lineage>
</organism>
<dbReference type="EMBL" id="HM233944">
    <property type="protein sequence ID" value="ADV16822.1"/>
    <property type="molecule type" value="mRNA"/>
</dbReference>
<dbReference type="SMR" id="E7CLN5"/>
<dbReference type="GO" id="GO:0005576">
    <property type="term" value="C:extracellular region"/>
    <property type="evidence" value="ECO:0007669"/>
    <property type="project" value="UniProtKB-SubCell"/>
</dbReference>
<dbReference type="GO" id="GO:0019871">
    <property type="term" value="F:sodium channel inhibitor activity"/>
    <property type="evidence" value="ECO:0007669"/>
    <property type="project" value="InterPro"/>
</dbReference>
<dbReference type="GO" id="GO:0090729">
    <property type="term" value="F:toxin activity"/>
    <property type="evidence" value="ECO:0007669"/>
    <property type="project" value="UniProtKB-KW"/>
</dbReference>
<dbReference type="GO" id="GO:0006952">
    <property type="term" value="P:defense response"/>
    <property type="evidence" value="ECO:0007669"/>
    <property type="project" value="InterPro"/>
</dbReference>
<dbReference type="CDD" id="cd23106">
    <property type="entry name" value="neurotoxins_LC_scorpion"/>
    <property type="match status" value="1"/>
</dbReference>
<dbReference type="FunFam" id="3.30.30.10:FF:000002">
    <property type="entry name" value="Alpha-like toxin BmK-M1"/>
    <property type="match status" value="1"/>
</dbReference>
<dbReference type="Gene3D" id="3.30.30.10">
    <property type="entry name" value="Knottin, scorpion toxin-like"/>
    <property type="match status" value="1"/>
</dbReference>
<dbReference type="InterPro" id="IPR044062">
    <property type="entry name" value="LCN-type_CS_alpha_beta_dom"/>
</dbReference>
<dbReference type="InterPro" id="IPR003614">
    <property type="entry name" value="Scorpion_toxin-like"/>
</dbReference>
<dbReference type="InterPro" id="IPR036574">
    <property type="entry name" value="Scorpion_toxin-like_sf"/>
</dbReference>
<dbReference type="InterPro" id="IPR018218">
    <property type="entry name" value="Scorpion_toxinL"/>
</dbReference>
<dbReference type="InterPro" id="IPR002061">
    <property type="entry name" value="Scorpion_toxinL/defensin"/>
</dbReference>
<dbReference type="Pfam" id="PF00537">
    <property type="entry name" value="Toxin_3"/>
    <property type="match status" value="1"/>
</dbReference>
<dbReference type="PRINTS" id="PR00285">
    <property type="entry name" value="SCORPNTOXIN"/>
</dbReference>
<dbReference type="SMART" id="SM00505">
    <property type="entry name" value="Knot1"/>
    <property type="match status" value="1"/>
</dbReference>
<dbReference type="SUPFAM" id="SSF57095">
    <property type="entry name" value="Scorpion toxin-like"/>
    <property type="match status" value="1"/>
</dbReference>
<dbReference type="PROSITE" id="PS51863">
    <property type="entry name" value="LCN_CSAB"/>
    <property type="match status" value="1"/>
</dbReference>
<name>SCX7_RHOJU</name>
<evidence type="ECO:0000250" key="1"/>
<evidence type="ECO:0000250" key="2">
    <source>
        <dbReference type="UniProtKB" id="P15226"/>
    </source>
</evidence>
<evidence type="ECO:0000250" key="3">
    <source>
        <dbReference type="UniProtKB" id="Q1I176"/>
    </source>
</evidence>
<evidence type="ECO:0000255" key="4"/>
<evidence type="ECO:0000255" key="5">
    <source>
        <dbReference type="PROSITE-ProRule" id="PRU01210"/>
    </source>
</evidence>
<evidence type="ECO:0000305" key="6"/>
<evidence type="ECO:0000305" key="7">
    <source>
    </source>
</evidence>
<evidence type="ECO:0000312" key="8">
    <source>
        <dbReference type="EMBL" id="ADV16822.1"/>
    </source>
</evidence>
<sequence length="65" mass="7313">KEGYPVGRDGCKISCVINNNFCKVECQAKWRQSDGYCYFWGLSCYCTNLPDDAQVWDSSTNKCGG</sequence>
<keyword id="KW-1015">Disulfide bond</keyword>
<keyword id="KW-0872">Ion channel impairing toxin</keyword>
<keyword id="KW-0528">Neurotoxin</keyword>
<keyword id="KW-0964">Secreted</keyword>
<keyword id="KW-0800">Toxin</keyword>
<keyword id="KW-0738">Voltage-gated sodium channel impairing toxin</keyword>
<feature type="chain" id="PRO_0000413457" description="Putative beta-neurotoxin RjAa7">
    <location>
        <begin position="1"/>
        <end position="65"/>
    </location>
</feature>
<feature type="domain" description="LCN-type CS-alpha/beta" evidence="5">
    <location>
        <begin position="1"/>
        <end position="64"/>
    </location>
</feature>
<feature type="disulfide bond" evidence="5">
    <location>
        <begin position="11"/>
        <end position="63"/>
    </location>
</feature>
<feature type="disulfide bond" evidence="5">
    <location>
        <begin position="15"/>
        <end position="37"/>
    </location>
</feature>
<feature type="disulfide bond" evidence="5">
    <location>
        <begin position="22"/>
        <end position="44"/>
    </location>
</feature>
<feature type="disulfide bond" evidence="5">
    <location>
        <begin position="26"/>
        <end position="46"/>
    </location>
</feature>
<feature type="non-terminal residue" evidence="8">
    <location>
        <position position="1"/>
    </location>
</feature>
<reference evidence="8" key="1">
    <citation type="journal article" date="2011" name="Toxicon">
        <title>Biochemical and molecular characterization of the venom from the Cuban scorpion Rhopalurus junceus.</title>
        <authorList>
            <person name="Garcia-Gomez B.I."/>
            <person name="Coronas F.I."/>
            <person name="Restano-Cassulini R."/>
            <person name="Rodriguez R.R."/>
            <person name="Possani L.D."/>
        </authorList>
    </citation>
    <scope>NUCLEOTIDE SEQUENCE [MRNA]</scope>
    <source>
        <tissue evidence="8">Venom gland</tissue>
    </source>
</reference>
<accession>E7CLN5</accession>